<dbReference type="EMBL" id="AE000666">
    <property type="protein sequence ID" value="AAB85403.1"/>
    <property type="molecule type" value="Genomic_DNA"/>
</dbReference>
<dbReference type="PIR" id="B69221">
    <property type="entry name" value="B69221"/>
</dbReference>
<dbReference type="RefSeq" id="WP_010876538.1">
    <property type="nucleotide sequence ID" value="NC_000916.1"/>
</dbReference>
<dbReference type="SMR" id="O26990"/>
<dbReference type="STRING" id="187420.MTH_905"/>
<dbReference type="PaxDb" id="187420-MTH_905"/>
<dbReference type="EnsemblBacteria" id="AAB85403">
    <property type="protein sequence ID" value="AAB85403"/>
    <property type="gene ID" value="MTH_905"/>
</dbReference>
<dbReference type="GeneID" id="1471313"/>
<dbReference type="KEGG" id="mth:MTH_905"/>
<dbReference type="PATRIC" id="fig|187420.15.peg.890"/>
<dbReference type="HOGENOM" id="CLU_077931_1_1_2"/>
<dbReference type="InParanoid" id="O26990"/>
<dbReference type="Proteomes" id="UP000005223">
    <property type="component" value="Chromosome"/>
</dbReference>
<dbReference type="GO" id="GO:0005886">
    <property type="term" value="C:plasma membrane"/>
    <property type="evidence" value="ECO:0007669"/>
    <property type="project" value="UniProtKB-SubCell"/>
</dbReference>
<dbReference type="GO" id="GO:0015225">
    <property type="term" value="F:biotin transmembrane transporter activity"/>
    <property type="evidence" value="ECO:0007669"/>
    <property type="project" value="InterPro"/>
</dbReference>
<dbReference type="Gene3D" id="1.10.1760.20">
    <property type="match status" value="1"/>
</dbReference>
<dbReference type="InterPro" id="IPR003784">
    <property type="entry name" value="BioY"/>
</dbReference>
<dbReference type="PANTHER" id="PTHR34295">
    <property type="entry name" value="BIOTIN TRANSPORTER BIOY"/>
    <property type="match status" value="1"/>
</dbReference>
<dbReference type="PANTHER" id="PTHR34295:SF1">
    <property type="entry name" value="BIOTIN TRANSPORTER BIOY"/>
    <property type="match status" value="1"/>
</dbReference>
<dbReference type="Pfam" id="PF02632">
    <property type="entry name" value="BioY"/>
    <property type="match status" value="1"/>
</dbReference>
<dbReference type="PIRSF" id="PIRSF016661">
    <property type="entry name" value="BioY"/>
    <property type="match status" value="1"/>
</dbReference>
<gene>
    <name type="primary">bioY</name>
    <name type="ordered locus">MTH_905</name>
</gene>
<protein>
    <recommendedName>
        <fullName>Probable biotin transporter BioY</fullName>
    </recommendedName>
</protein>
<proteinExistence type="inferred from homology"/>
<organism>
    <name type="scientific">Methanothermobacter thermautotrophicus (strain ATCC 29096 / DSM 1053 / JCM 10044 / NBRC 100330 / Delta H)</name>
    <name type="common">Methanobacterium thermoautotrophicum</name>
    <dbReference type="NCBI Taxonomy" id="187420"/>
    <lineage>
        <taxon>Archaea</taxon>
        <taxon>Methanobacteriati</taxon>
        <taxon>Methanobacteriota</taxon>
        <taxon>Methanomada group</taxon>
        <taxon>Methanobacteria</taxon>
        <taxon>Methanobacteriales</taxon>
        <taxon>Methanobacteriaceae</taxon>
        <taxon>Methanothermobacter</taxon>
    </lineage>
</organism>
<keyword id="KW-1003">Cell membrane</keyword>
<keyword id="KW-0472">Membrane</keyword>
<keyword id="KW-1185">Reference proteome</keyword>
<keyword id="KW-0812">Transmembrane</keyword>
<keyword id="KW-1133">Transmembrane helix</keyword>
<keyword id="KW-0813">Transport</keyword>
<accession>O26990</accession>
<name>BIOY_METTH</name>
<sequence length="157" mass="16827">MSGVILGRYWGGLSQLIYVIIGAAGVPWFADMSGGPEVLLGATGGYLLGFILAALLLGHFVDRHIRARKFTPMLGLMTIANFGLIYIPGLVVLGLWSLKTQGTLPGPWELLVMGLLPFIPGDILKITGAAALTRAITPKEPYGEEIDIQKAEGWRVP</sequence>
<feature type="chain" id="PRO_0000144148" description="Probable biotin transporter BioY">
    <location>
        <begin position="1"/>
        <end position="157"/>
    </location>
</feature>
<feature type="transmembrane region" description="Helical" evidence="2">
    <location>
        <begin position="10"/>
        <end position="30"/>
    </location>
</feature>
<feature type="transmembrane region" description="Helical" evidence="2">
    <location>
        <begin position="38"/>
        <end position="58"/>
    </location>
</feature>
<feature type="transmembrane region" description="Helical" evidence="2">
    <location>
        <begin position="76"/>
        <end position="96"/>
    </location>
</feature>
<feature type="transmembrane region" description="Helical" evidence="2">
    <location>
        <begin position="104"/>
        <end position="124"/>
    </location>
</feature>
<evidence type="ECO:0000250" key="1"/>
<evidence type="ECO:0000255" key="2"/>
<evidence type="ECO:0000305" key="3"/>
<reference key="1">
    <citation type="journal article" date="1997" name="J. Bacteriol.">
        <title>Complete genome sequence of Methanobacterium thermoautotrophicum deltaH: functional analysis and comparative genomics.</title>
        <authorList>
            <person name="Smith D.R."/>
            <person name="Doucette-Stamm L.A."/>
            <person name="Deloughery C."/>
            <person name="Lee H.-M."/>
            <person name="Dubois J."/>
            <person name="Aldredge T."/>
            <person name="Bashirzadeh R."/>
            <person name="Blakely D."/>
            <person name="Cook R."/>
            <person name="Gilbert K."/>
            <person name="Harrison D."/>
            <person name="Hoang L."/>
            <person name="Keagle P."/>
            <person name="Lumm W."/>
            <person name="Pothier B."/>
            <person name="Qiu D."/>
            <person name="Spadafora R."/>
            <person name="Vicare R."/>
            <person name="Wang Y."/>
            <person name="Wierzbowski J."/>
            <person name="Gibson R."/>
            <person name="Jiwani N."/>
            <person name="Caruso A."/>
            <person name="Bush D."/>
            <person name="Safer H."/>
            <person name="Patwell D."/>
            <person name="Prabhakar S."/>
            <person name="McDougall S."/>
            <person name="Shimer G."/>
            <person name="Goyal A."/>
            <person name="Pietrovski S."/>
            <person name="Church G.M."/>
            <person name="Daniels C.J."/>
            <person name="Mao J.-I."/>
            <person name="Rice P."/>
            <person name="Noelling J."/>
            <person name="Reeve J.N."/>
        </authorList>
    </citation>
    <scope>NUCLEOTIDE SEQUENCE [LARGE SCALE GENOMIC DNA]</scope>
    <source>
        <strain>ATCC 29096 / DSM 1053 / JCM 10044 / NBRC 100330 / Delta H</strain>
    </source>
</reference>
<comment type="function">
    <text evidence="1">Probable biotin transporter.</text>
</comment>
<comment type="subcellular location">
    <subcellularLocation>
        <location evidence="3">Cell membrane</location>
        <topology evidence="3">Multi-pass membrane protein</topology>
    </subcellularLocation>
</comment>
<comment type="similarity">
    <text evidence="3">Belongs to the BioY family.</text>
</comment>